<name>USO1_YEAST</name>
<protein>
    <recommendedName>
        <fullName>Intracellular protein transport protein USO1</fullName>
        <shortName>Int-1</shortName>
    </recommendedName>
</protein>
<reference key="1">
    <citation type="journal article" date="1991" name="J. Cell Biol.">
        <title>A cytoskeleton-related gene, uso1, is required for intracellular protein transport in Saccharomyces cerevisiae.</title>
        <authorList>
            <person name="Nakajima H."/>
            <person name="Hirata A."/>
            <person name="Ogawa Y."/>
            <person name="Yonehara T."/>
            <person name="Yoda K."/>
            <person name="Yamasaki M."/>
        </authorList>
    </citation>
    <scope>NUCLEOTIDE SEQUENCE [GENOMIC DNA]</scope>
    <source>
        <strain>ATCC 26786 / X2180-1A</strain>
    </source>
</reference>
<reference key="2">
    <citation type="journal article" date="1997" name="Nature">
        <title>The nucleotide sequence of Saccharomyces cerevisiae chromosome IV.</title>
        <authorList>
            <person name="Jacq C."/>
            <person name="Alt-Moerbe J."/>
            <person name="Andre B."/>
            <person name="Arnold W."/>
            <person name="Bahr A."/>
            <person name="Ballesta J.P.G."/>
            <person name="Bargues M."/>
            <person name="Baron L."/>
            <person name="Becker A."/>
            <person name="Biteau N."/>
            <person name="Bloecker H."/>
            <person name="Blugeon C."/>
            <person name="Boskovic J."/>
            <person name="Brandt P."/>
            <person name="Brueckner M."/>
            <person name="Buitrago M.J."/>
            <person name="Coster F."/>
            <person name="Delaveau T."/>
            <person name="del Rey F."/>
            <person name="Dujon B."/>
            <person name="Eide L.G."/>
            <person name="Garcia-Cantalejo J.M."/>
            <person name="Goffeau A."/>
            <person name="Gomez-Peris A."/>
            <person name="Granotier C."/>
            <person name="Hanemann V."/>
            <person name="Hankeln T."/>
            <person name="Hoheisel J.D."/>
            <person name="Jaeger W."/>
            <person name="Jimenez A."/>
            <person name="Jonniaux J.-L."/>
            <person name="Kraemer C."/>
            <person name="Kuester H."/>
            <person name="Laamanen P."/>
            <person name="Legros Y."/>
            <person name="Louis E.J."/>
            <person name="Moeller-Rieker S."/>
            <person name="Monnet A."/>
            <person name="Moro M."/>
            <person name="Mueller-Auer S."/>
            <person name="Nussbaumer B."/>
            <person name="Paricio N."/>
            <person name="Paulin L."/>
            <person name="Perea J."/>
            <person name="Perez-Alonso M."/>
            <person name="Perez-Ortin J.E."/>
            <person name="Pohl T.M."/>
            <person name="Prydz H."/>
            <person name="Purnelle B."/>
            <person name="Rasmussen S.W."/>
            <person name="Remacha M.A."/>
            <person name="Revuelta J.L."/>
            <person name="Rieger M."/>
            <person name="Salom D."/>
            <person name="Saluz H.P."/>
            <person name="Saiz J.E."/>
            <person name="Saren A.-M."/>
            <person name="Schaefer M."/>
            <person name="Scharfe M."/>
            <person name="Schmidt E.R."/>
            <person name="Schneider C."/>
            <person name="Scholler P."/>
            <person name="Schwarz S."/>
            <person name="Soler-Mira A."/>
            <person name="Urrestarazu L.A."/>
            <person name="Verhasselt P."/>
            <person name="Vissers S."/>
            <person name="Voet M."/>
            <person name="Volckaert G."/>
            <person name="Wagner G."/>
            <person name="Wambutt R."/>
            <person name="Wedler E."/>
            <person name="Wedler H."/>
            <person name="Woelfl S."/>
            <person name="Harris D.E."/>
            <person name="Bowman S."/>
            <person name="Brown D."/>
            <person name="Churcher C.M."/>
            <person name="Connor R."/>
            <person name="Dedman K."/>
            <person name="Gentles S."/>
            <person name="Hamlin N."/>
            <person name="Hunt S."/>
            <person name="Jones L."/>
            <person name="McDonald S."/>
            <person name="Murphy L.D."/>
            <person name="Niblett D."/>
            <person name="Odell C."/>
            <person name="Oliver K."/>
            <person name="Rajandream M.A."/>
            <person name="Richards C."/>
            <person name="Shore L."/>
            <person name="Walsh S.V."/>
            <person name="Barrell B.G."/>
            <person name="Dietrich F.S."/>
            <person name="Mulligan J.T."/>
            <person name="Allen E."/>
            <person name="Araujo R."/>
            <person name="Aviles E."/>
            <person name="Berno A."/>
            <person name="Carpenter J."/>
            <person name="Chen E."/>
            <person name="Cherry J.M."/>
            <person name="Chung E."/>
            <person name="Duncan M."/>
            <person name="Hunicke-Smith S."/>
            <person name="Hyman R.W."/>
            <person name="Komp C."/>
            <person name="Lashkari D."/>
            <person name="Lew H."/>
            <person name="Lin D."/>
            <person name="Mosedale D."/>
            <person name="Nakahara K."/>
            <person name="Namath A."/>
            <person name="Oefner P."/>
            <person name="Oh C."/>
            <person name="Petel F.X."/>
            <person name="Roberts D."/>
            <person name="Schramm S."/>
            <person name="Schroeder M."/>
            <person name="Shogren T."/>
            <person name="Shroff N."/>
            <person name="Winant A."/>
            <person name="Yelton M.A."/>
            <person name="Botstein D."/>
            <person name="Davis R.W."/>
            <person name="Johnston M."/>
            <person name="Andrews S."/>
            <person name="Brinkman R."/>
            <person name="Cooper J."/>
            <person name="Ding H."/>
            <person name="Du Z."/>
            <person name="Favello A."/>
            <person name="Fulton L."/>
            <person name="Gattung S."/>
            <person name="Greco T."/>
            <person name="Hallsworth K."/>
            <person name="Hawkins J."/>
            <person name="Hillier L.W."/>
            <person name="Jier M."/>
            <person name="Johnson D."/>
            <person name="Johnston L."/>
            <person name="Kirsten J."/>
            <person name="Kucaba T."/>
            <person name="Langston Y."/>
            <person name="Latreille P."/>
            <person name="Le T."/>
            <person name="Mardis E."/>
            <person name="Menezes S."/>
            <person name="Miller N."/>
            <person name="Nhan M."/>
            <person name="Pauley A."/>
            <person name="Peluso D."/>
            <person name="Rifkin L."/>
            <person name="Riles L."/>
            <person name="Taich A."/>
            <person name="Trevaskis E."/>
            <person name="Vignati D."/>
            <person name="Wilcox L."/>
            <person name="Wohldman P."/>
            <person name="Vaudin M."/>
            <person name="Wilson R."/>
            <person name="Waterston R."/>
            <person name="Albermann K."/>
            <person name="Hani J."/>
            <person name="Heumann K."/>
            <person name="Kleine K."/>
            <person name="Mewes H.-W."/>
            <person name="Zollner A."/>
            <person name="Zaccaria P."/>
        </authorList>
    </citation>
    <scope>NUCLEOTIDE SEQUENCE [LARGE SCALE GENOMIC DNA]</scope>
    <source>
        <strain>ATCC 204508 / S288c</strain>
    </source>
</reference>
<reference key="3">
    <citation type="journal article" date="2014" name="G3 (Bethesda)">
        <title>The reference genome sequence of Saccharomyces cerevisiae: Then and now.</title>
        <authorList>
            <person name="Engel S.R."/>
            <person name="Dietrich F.S."/>
            <person name="Fisk D.G."/>
            <person name="Binkley G."/>
            <person name="Balakrishnan R."/>
            <person name="Costanzo M.C."/>
            <person name="Dwight S.S."/>
            <person name="Hitz B.C."/>
            <person name="Karra K."/>
            <person name="Nash R.S."/>
            <person name="Weng S."/>
            <person name="Wong E.D."/>
            <person name="Lloyd P."/>
            <person name="Skrzypek M.S."/>
            <person name="Miyasato S.R."/>
            <person name="Simison M."/>
            <person name="Cherry J.M."/>
        </authorList>
    </citation>
    <scope>GENOME REANNOTATION</scope>
    <source>
        <strain>ATCC 204508 / S288c</strain>
    </source>
</reference>
<reference key="4">
    <citation type="submission" date="1996-05" db="EMBL/GenBank/DDBJ databases">
        <authorList>
            <person name="Bai Y."/>
            <person name="Symington L.S."/>
        </authorList>
    </citation>
    <scope>NUCLEOTIDE SEQUENCE [GENOMIC DNA] OF 1-8</scope>
</reference>
<reference key="5">
    <citation type="journal article" date="1995" name="Biochem. Mol. Med.">
        <title>Antigenic and functional conservation of an integrin I-domain in Saccharomyces cerevisiae.</title>
        <authorList>
            <person name="Hostetter M.K."/>
            <person name="Tao N.J."/>
            <person name="Gale C."/>
            <person name="Herman D.J."/>
            <person name="McClellan M."/>
            <person name="Sharp R.L."/>
            <person name="Kendrick K.E."/>
        </authorList>
    </citation>
    <scope>NUCLEOTIDE SEQUENCE [GENOMIC DNA] OF 782-1790</scope>
</reference>
<reference key="6">
    <citation type="journal article" date="1996" name="J. Struct. Biol.">
        <title>Uso1 protein is a dimer with two globular heads and a long coiled-coil tail.</title>
        <authorList>
            <person name="Yamakawa H."/>
            <person name="Seog D.H."/>
            <person name="Yoda K."/>
            <person name="Yamasaki M."/>
            <person name="Wakabayashi T."/>
        </authorList>
    </citation>
    <scope>PARTIAL PROTEIN SEQUENCE</scope>
    <scope>SUBUNIT</scope>
    <scope>DOMAIN</scope>
</reference>
<reference key="7">
    <citation type="journal article" date="2003" name="Nature">
        <title>Global analysis of protein expression in yeast.</title>
        <authorList>
            <person name="Ghaemmaghami S."/>
            <person name="Huh W.-K."/>
            <person name="Bower K."/>
            <person name="Howson R.W."/>
            <person name="Belle A."/>
            <person name="Dephoure N."/>
            <person name="O'Shea E.K."/>
            <person name="Weissman J.S."/>
        </authorList>
    </citation>
    <scope>LEVEL OF PROTEIN EXPRESSION [LARGE SCALE ANALYSIS]</scope>
</reference>
<reference key="8">
    <citation type="journal article" date="2008" name="Mol. Cell. Proteomics">
        <title>A multidimensional chromatography technology for in-depth phosphoproteome analysis.</title>
        <authorList>
            <person name="Albuquerque C.P."/>
            <person name="Smolka M.B."/>
            <person name="Payne S.H."/>
            <person name="Bafna V."/>
            <person name="Eng J."/>
            <person name="Zhou H."/>
        </authorList>
    </citation>
    <scope>IDENTIFICATION BY MASS SPECTROMETRY [LARGE SCALE ANALYSIS]</scope>
</reference>
<reference key="9">
    <citation type="journal article" date="2009" name="Science">
        <title>Global analysis of Cdk1 substrate phosphorylation sites provides insights into evolution.</title>
        <authorList>
            <person name="Holt L.J."/>
            <person name="Tuch B.B."/>
            <person name="Villen J."/>
            <person name="Johnson A.D."/>
            <person name="Gygi S.P."/>
            <person name="Morgan D.O."/>
        </authorList>
    </citation>
    <scope>PHOSPHORYLATION [LARGE SCALE ANALYSIS] AT SER-1770</scope>
    <scope>IDENTIFICATION BY MASS SPECTROMETRY [LARGE SCALE ANALYSIS]</scope>
</reference>
<accession>P25386</accession>
<accession>D6VRT8</accession>
<accession>E9PAG8</accession>
<accession>P89892</accession>
<accession>Q07380</accession>
<dbReference type="EMBL" id="X54378">
    <property type="protein sequence ID" value="CAA38253.1"/>
    <property type="molecule type" value="Genomic_DNA"/>
</dbReference>
<dbReference type="EMBL" id="Z74105">
    <property type="protein sequence ID" value="CAA98620.1"/>
    <property type="molecule type" value="Genomic_DNA"/>
</dbReference>
<dbReference type="EMBL" id="Z74106">
    <property type="protein sequence ID" value="CAA98621.1"/>
    <property type="molecule type" value="Genomic_DNA"/>
</dbReference>
<dbReference type="EMBL" id="U53668">
    <property type="protein sequence ID" value="AAB66659.1"/>
    <property type="molecule type" value="Genomic_DNA"/>
</dbReference>
<dbReference type="EMBL" id="L03188">
    <property type="protein sequence ID" value="AAB00143.1"/>
    <property type="molecule type" value="Genomic_DNA"/>
</dbReference>
<dbReference type="EMBL" id="BK006938">
    <property type="protein sequence ID" value="DAA11798.1"/>
    <property type="molecule type" value="Genomic_DNA"/>
</dbReference>
<dbReference type="PIR" id="S67593">
    <property type="entry name" value="S67593"/>
</dbReference>
<dbReference type="RefSeq" id="NP_010225.1">
    <property type="nucleotide sequence ID" value="NM_001180117.1"/>
</dbReference>
<dbReference type="PDB" id="6LST">
    <property type="method" value="X-ray"/>
    <property type="resolution" value="2.94 A"/>
    <property type="chains" value="A=1-726"/>
</dbReference>
<dbReference type="PDB" id="6LSU">
    <property type="method" value="X-ray"/>
    <property type="resolution" value="2.70 A"/>
    <property type="chains" value="A=1-726"/>
</dbReference>
<dbReference type="PDBsum" id="6LST"/>
<dbReference type="PDBsum" id="6LSU"/>
<dbReference type="SMR" id="P25386"/>
<dbReference type="BioGRID" id="32000">
    <property type="interactions" value="317"/>
</dbReference>
<dbReference type="DIP" id="DIP-6815N"/>
<dbReference type="FunCoup" id="P25386">
    <property type="interactions" value="321"/>
</dbReference>
<dbReference type="IntAct" id="P25386">
    <property type="interactions" value="7"/>
</dbReference>
<dbReference type="MINT" id="P25386"/>
<dbReference type="STRING" id="4932.YDL058W"/>
<dbReference type="CarbonylDB" id="P25386"/>
<dbReference type="iPTMnet" id="P25386"/>
<dbReference type="PaxDb" id="4932-YDL058W"/>
<dbReference type="PeptideAtlas" id="P25386"/>
<dbReference type="EnsemblFungi" id="YDL058W_mRNA">
    <property type="protein sequence ID" value="YDL058W"/>
    <property type="gene ID" value="YDL058W"/>
</dbReference>
<dbReference type="GeneID" id="851501"/>
<dbReference type="KEGG" id="sce:YDL058W"/>
<dbReference type="AGR" id="SGD:S000002216"/>
<dbReference type="SGD" id="S000002216">
    <property type="gene designation" value="USO1"/>
</dbReference>
<dbReference type="VEuPathDB" id="FungiDB:YDL058W"/>
<dbReference type="eggNOG" id="KOG0946">
    <property type="taxonomic scope" value="Eukaryota"/>
</dbReference>
<dbReference type="GeneTree" id="ENSGT00390000017018"/>
<dbReference type="HOGENOM" id="CLU_001063_0_0_1"/>
<dbReference type="InParanoid" id="P25386"/>
<dbReference type="OMA" id="FFWNDQR"/>
<dbReference type="OrthoDB" id="198977at2759"/>
<dbReference type="BioCyc" id="YEAST:G3O-29474-MONOMER"/>
<dbReference type="Reactome" id="R-SCE-204005">
    <property type="pathway name" value="COPII-mediated vesicle transport"/>
</dbReference>
<dbReference type="Reactome" id="R-SCE-6807878">
    <property type="pathway name" value="COPI-mediated anterograde transport"/>
</dbReference>
<dbReference type="BioGRID-ORCS" id="851501">
    <property type="hits" value="8 hits in 10 CRISPR screens"/>
</dbReference>
<dbReference type="PRO" id="PR:P25386"/>
<dbReference type="Proteomes" id="UP000002311">
    <property type="component" value="Chromosome IV"/>
</dbReference>
<dbReference type="RNAct" id="P25386">
    <property type="molecule type" value="protein"/>
</dbReference>
<dbReference type="GO" id="GO:0005856">
    <property type="term" value="C:cytoskeleton"/>
    <property type="evidence" value="ECO:0007669"/>
    <property type="project" value="UniProtKB-SubCell"/>
</dbReference>
<dbReference type="GO" id="GO:0005783">
    <property type="term" value="C:endoplasmic reticulum"/>
    <property type="evidence" value="ECO:0000318"/>
    <property type="project" value="GO_Central"/>
</dbReference>
<dbReference type="GO" id="GO:0005789">
    <property type="term" value="C:endoplasmic reticulum membrane"/>
    <property type="evidence" value="ECO:0007669"/>
    <property type="project" value="UniProtKB-SubCell"/>
</dbReference>
<dbReference type="GO" id="GO:0012507">
    <property type="term" value="C:ER to Golgi transport vesicle membrane"/>
    <property type="evidence" value="ECO:0000314"/>
    <property type="project" value="SGD"/>
</dbReference>
<dbReference type="GO" id="GO:0000139">
    <property type="term" value="C:Golgi membrane"/>
    <property type="evidence" value="ECO:0000314"/>
    <property type="project" value="SGD"/>
</dbReference>
<dbReference type="GO" id="GO:0005795">
    <property type="term" value="C:Golgi stack"/>
    <property type="evidence" value="ECO:0000318"/>
    <property type="project" value="GO_Central"/>
</dbReference>
<dbReference type="GO" id="GO:0006888">
    <property type="term" value="P:endoplasmic reticulum to Golgi vesicle-mediated transport"/>
    <property type="evidence" value="ECO:0000315"/>
    <property type="project" value="SGD"/>
</dbReference>
<dbReference type="GO" id="GO:0048211">
    <property type="term" value="P:Golgi vesicle docking"/>
    <property type="evidence" value="ECO:0000314"/>
    <property type="project" value="SGD"/>
</dbReference>
<dbReference type="GO" id="GO:0006886">
    <property type="term" value="P:intracellular protein transport"/>
    <property type="evidence" value="ECO:0000318"/>
    <property type="project" value="GO_Central"/>
</dbReference>
<dbReference type="GO" id="GO:0061025">
    <property type="term" value="P:membrane fusion"/>
    <property type="evidence" value="ECO:0000318"/>
    <property type="project" value="GO_Central"/>
</dbReference>
<dbReference type="GO" id="GO:0035493">
    <property type="term" value="P:SNARE complex assembly"/>
    <property type="evidence" value="ECO:0000315"/>
    <property type="project" value="SGD"/>
</dbReference>
<dbReference type="GO" id="GO:0048280">
    <property type="term" value="P:vesicle fusion with Golgi apparatus"/>
    <property type="evidence" value="ECO:0007669"/>
    <property type="project" value="InterPro"/>
</dbReference>
<dbReference type="Gene3D" id="1.10.287.1490">
    <property type="match status" value="1"/>
</dbReference>
<dbReference type="Gene3D" id="1.25.10.10">
    <property type="entry name" value="Leucine-rich Repeat Variant"/>
    <property type="match status" value="1"/>
</dbReference>
<dbReference type="InterPro" id="IPR011989">
    <property type="entry name" value="ARM-like"/>
</dbReference>
<dbReference type="InterPro" id="IPR016024">
    <property type="entry name" value="ARM-type_fold"/>
</dbReference>
<dbReference type="InterPro" id="IPR006955">
    <property type="entry name" value="Uso1_p115_C"/>
</dbReference>
<dbReference type="InterPro" id="IPR024095">
    <property type="entry name" value="Vesicle_P115"/>
</dbReference>
<dbReference type="InterPro" id="IPR006953">
    <property type="entry name" value="Vesicle_Uso1_P115_head"/>
</dbReference>
<dbReference type="PANTHER" id="PTHR10013">
    <property type="entry name" value="GENERAL VESICULAR TRANSPORT FACTOR P115"/>
    <property type="match status" value="1"/>
</dbReference>
<dbReference type="PANTHER" id="PTHR10013:SF0">
    <property type="entry name" value="GENERAL VESICULAR TRANSPORT FACTOR P115"/>
    <property type="match status" value="1"/>
</dbReference>
<dbReference type="Pfam" id="PF04871">
    <property type="entry name" value="Uso1_p115_C"/>
    <property type="match status" value="1"/>
</dbReference>
<dbReference type="Pfam" id="PF04869">
    <property type="entry name" value="Uso1_p115_head"/>
    <property type="match status" value="1"/>
</dbReference>
<dbReference type="SUPFAM" id="SSF48371">
    <property type="entry name" value="ARM repeat"/>
    <property type="match status" value="1"/>
</dbReference>
<sequence>MDIIQGLIQQPKIQSVDETIPTLCDRVENSTLISDRRSAVLGLKAFSRQYRESVIASGLKPLLNTLKRDYMDEDSVKAILETILILFIRGDGHDDLTRGWISQQSRLQNGKYPSPLVMKQEKEQVDQFSLWIADALTQSEDLIHLLVEFWEIDNFHIRLYTIQLLEAVMATRPLKARSALISLPTSISTMVSLLDDMHEPIRDEAILLLMAVVNDSPHVQKLVAFENIFERLFSIIEEEGGLRGSLVVNDCLSLINNILKYNTSNQTLFLETGNLPKLAHLLSEPISQDEVFFWNDQRIVNINTALDIVSLTVEPGNTVTTKHQNALLDSSVLMVVLRLAFFHNIPKKVRPVALLTAANMVRSNEHAQLEFSKIDVPYFDPSLPVNSTANGGPIKLIPVVSILINWMLYANSVHTFDTRVACSRLLKAYFMDNFDLQRDFLLKQVQLCNNSTNNVGDNAKENGGSNKSDKESDSDKDTDGKDGTEYEGSFKANLFEVLLNYDAELNLNPFKLFFTTDIFMFFFQQDHKYSEELREITRNVTTGNDLEDEEPLKAIQTISELLTTSLTAADIRIPISYLTFLIYWLFGDFKATNDFLSDKSVIKSLLSFSYQIQDEDVTIKCLVTMLLGVAYEFSSKESPFPRKEYFEFITKTLGKDNYASRIKQFKKDSYFSKVDMNEDSILTPELDETGLPKVYFSTYFIQLFNENIYRIRTALSHDPDEEPINKISFEEVEKLQRQCTKLKGEITSLQTETESTHENLTEKLIALTNEHKELDEKYQILNSSHSSLKENFSILETELKNVRDSLDEMTQLRDVLETKDKENQTALLEYKSTIHKQEDSIKTLEKGLETILSQKKKAEDGINKMGKDLFALSREMQAVEENCKNLQKEKDKSNVNHQKETKSLKEDIAAKITEIKAINENLEEMKIQCNNLSKEKEHISKELVEYKSRFQSHDNLVAKLTEKLKSLANNYKDMQAENESLIKAVEESKNESSIQLSNLQNKIDSMSQEKENFQIERGSIEKNIEQLKKTISDLEQTKEEIISKSDSSKDEYESQISLLKEKLETATTANDENVNKISELTKTREELEAELAAYKNLKNELETKLETSEKALKEVKENEEHLKEEKIQLEKEATETKQQLNSLRANLESLEKEHEDLAAQLKKYEEQIANKERQYNEEISQLNDEITSTQQENESIKKKNDELEGEVKAMKSTSEEQSNLKKSEIDALNLQIKELKKKNETNEASLLESIKSVESETVKIKELQDECNFKEKEVSELEDKLKASEDKNSKYLELQKESEKIKEELDAKTTELKIQLEKITNLSKAKEKSESELSRLKKTSSEERKNAEEQLEKLKNEIQIKNQAFEKERKLLNEGSSTITQEYSEKINTLEDELIRLQNENELKAKEIDNTRSELEKVSLSNDELLEEKQNTIKSLQDEILSYKDKITRNDEKLLSIERDNKRDLESLKEQLRAAQESKAKVEEGLKKLEEESSKEKAELEKSKEMMKKLESTIESNETELKSSMETIRKSDEKLEQSKKSAEEDIKNLQHEKSDLISRINESEKDIEELKSKLRIEAKSGSELETVKQELNNAQEKIRINAEENTVLKSKLEDIERELKDKQAEIKSNQEEKELLTSRLKELEQELDSTQQKAQKSEEERRAEVRKFQVEKSQLDEKAMLLETKYNDLVNKEQAWKRDEDTVKKTTDSQRQEIEKLAKELDNLKAENSKLKEANEDRSEIDDLMLLVTDLDEKNAKYRSKLKDLGVEISSDEEDDEEDDEEDEEEGQVA</sequence>
<comment type="function">
    <text>Required for protein transport from the ER to the Golgi complex.</text>
</comment>
<comment type="subunit">
    <text evidence="4">Homodimer. Dimerizes by parallel association of the tails, resulting in an elongated structure with two globular head domains side by side, and a long rod-like tail structure.</text>
</comment>
<comment type="subcellular location">
    <subcellularLocation>
        <location>Cytoplasm</location>
        <location>Cytoskeleton</location>
    </subcellularLocation>
    <subcellularLocation>
        <location evidence="5">Cytoplasmic vesicle membrane</location>
        <topology evidence="5">Peripheral membrane protein</topology>
    </subcellularLocation>
    <subcellularLocation>
        <location evidence="5">Endoplasmic reticulum membrane</location>
        <topology evidence="5">Peripheral membrane protein</topology>
    </subcellularLocation>
    <subcellularLocation>
        <location evidence="5">Golgi apparatus membrane</location>
        <topology evidence="5">Peripheral membrane protein</topology>
    </subcellularLocation>
    <text>Probably present on vesicles operational between the ER and the Golgi complex.</text>
</comment>
<comment type="domain">
    <text evidence="4">Composed of a globular head region and a rod-like C-terminal coiled coil domain. The rodlike tail sequence is highly repetitive, composed of a heptapeptide repeat pattern characteristic of alpha-helical coiled coils. May form filamentous structures in the cell.</text>
</comment>
<comment type="miscellaneous">
    <text evidence="3">Present with 2330 molecules/cell in log phase SD medium.</text>
</comment>
<comment type="similarity">
    <text evidence="5">Belongs to the VDP/USO1/EDE1 family.</text>
</comment>
<organism>
    <name type="scientific">Saccharomyces cerevisiae (strain ATCC 204508 / S288c)</name>
    <name type="common">Baker's yeast</name>
    <dbReference type="NCBI Taxonomy" id="559292"/>
    <lineage>
        <taxon>Eukaryota</taxon>
        <taxon>Fungi</taxon>
        <taxon>Dikarya</taxon>
        <taxon>Ascomycota</taxon>
        <taxon>Saccharomycotina</taxon>
        <taxon>Saccharomycetes</taxon>
        <taxon>Saccharomycetales</taxon>
        <taxon>Saccharomycetaceae</taxon>
        <taxon>Saccharomyces</taxon>
    </lineage>
</organism>
<proteinExistence type="evidence at protein level"/>
<gene>
    <name type="primary">USO1</name>
    <name type="synonym">INT1</name>
    <name type="ordered locus">YDL058W</name>
</gene>
<evidence type="ECO:0000255" key="1"/>
<evidence type="ECO:0000256" key="2">
    <source>
        <dbReference type="SAM" id="MobiDB-lite"/>
    </source>
</evidence>
<evidence type="ECO:0000269" key="3">
    <source>
    </source>
</evidence>
<evidence type="ECO:0000269" key="4">
    <source>
    </source>
</evidence>
<evidence type="ECO:0000305" key="5"/>
<evidence type="ECO:0007744" key="6">
    <source>
    </source>
</evidence>
<evidence type="ECO:0007829" key="7">
    <source>
        <dbReference type="PDB" id="6LST"/>
    </source>
</evidence>
<evidence type="ECO:0007829" key="8">
    <source>
        <dbReference type="PDB" id="6LSU"/>
    </source>
</evidence>
<feature type="chain" id="PRO_0000065730" description="Intracellular protein transport protein USO1">
    <location>
        <begin position="1"/>
        <end position="1790"/>
    </location>
</feature>
<feature type="repeat" description="ARM 1">
    <location>
        <begin position="45"/>
        <end position="89"/>
    </location>
</feature>
<feature type="repeat" description="ARM 2">
    <location>
        <begin position="127"/>
        <end position="170"/>
    </location>
</feature>
<feature type="repeat" description="ARM 3">
    <location>
        <begin position="173"/>
        <end position="213"/>
    </location>
</feature>
<feature type="repeat" description="ARM 4">
    <location>
        <begin position="215"/>
        <end position="260"/>
    </location>
</feature>
<feature type="repeat" description="ARM 5">
    <location>
        <begin position="261"/>
        <end position="312"/>
    </location>
</feature>
<feature type="repeat" description="ARM 6">
    <location>
        <begin position="314"/>
        <end position="362"/>
    </location>
</feature>
<feature type="repeat" description="ARM 7">
    <location>
        <begin position="363"/>
        <end position="429"/>
    </location>
</feature>
<feature type="repeat" description="ARM 8">
    <location>
        <begin position="431"/>
        <end position="512"/>
    </location>
</feature>
<feature type="repeat" description="ARM 9">
    <location>
        <begin position="543"/>
        <end position="584"/>
    </location>
</feature>
<feature type="repeat" description="ARM 10">
    <location>
        <begin position="586"/>
        <end position="630"/>
    </location>
</feature>
<feature type="region of interest" description="Globular head">
    <location>
        <begin position="1"/>
        <end position="724"/>
    </location>
</feature>
<feature type="region of interest" description="Disordered" evidence="2">
    <location>
        <begin position="452"/>
        <end position="484"/>
    </location>
</feature>
<feature type="region of interest" description="Charged (hyper-hydrophilic)">
    <location>
        <begin position="465"/>
        <end position="487"/>
    </location>
</feature>
<feature type="region of interest" description="Dispensable for the protein function">
    <location>
        <begin position="991"/>
        <end position="1790"/>
    </location>
</feature>
<feature type="region of interest" description="Disordered" evidence="2">
    <location>
        <begin position="1185"/>
        <end position="1221"/>
    </location>
</feature>
<feature type="region of interest" description="Disordered" evidence="2">
    <location>
        <begin position="1326"/>
        <end position="1351"/>
    </location>
</feature>
<feature type="region of interest" description="Disordered" evidence="2">
    <location>
        <begin position="1485"/>
        <end position="1547"/>
    </location>
</feature>
<feature type="region of interest" description="Disordered" evidence="2">
    <location>
        <begin position="1645"/>
        <end position="1667"/>
    </location>
</feature>
<feature type="region of interest" description="Disordered" evidence="2">
    <location>
        <begin position="1722"/>
        <end position="1742"/>
    </location>
</feature>
<feature type="region of interest" description="Disordered" evidence="2">
    <location>
        <begin position="1762"/>
        <end position="1790"/>
    </location>
</feature>
<feature type="coiled-coil region" evidence="1">
    <location>
        <begin position="725"/>
        <end position="1790"/>
    </location>
</feature>
<feature type="compositionally biased region" description="Basic and acidic residues" evidence="2">
    <location>
        <begin position="467"/>
        <end position="484"/>
    </location>
</feature>
<feature type="compositionally biased region" description="Basic and acidic residues" evidence="2">
    <location>
        <begin position="1194"/>
        <end position="1209"/>
    </location>
</feature>
<feature type="compositionally biased region" description="Basic and acidic residues" evidence="2">
    <location>
        <begin position="1485"/>
        <end position="1512"/>
    </location>
</feature>
<feature type="compositionally biased region" description="Basic and acidic residues" evidence="2">
    <location>
        <begin position="1519"/>
        <end position="1547"/>
    </location>
</feature>
<feature type="compositionally biased region" description="Basic and acidic residues" evidence="2">
    <location>
        <begin position="1655"/>
        <end position="1667"/>
    </location>
</feature>
<feature type="compositionally biased region" description="Basic and acidic residues" evidence="2">
    <location>
        <begin position="1722"/>
        <end position="1738"/>
    </location>
</feature>
<feature type="compositionally biased region" description="Acidic residues" evidence="2">
    <location>
        <begin position="1770"/>
        <end position="1790"/>
    </location>
</feature>
<feature type="modified residue" description="Phosphoserine" evidence="6">
    <location>
        <position position="1770"/>
    </location>
</feature>
<feature type="sequence conflict" description="In Ref. 1; CAA38253." evidence="5" ref="1">
    <original>NG</original>
    <variation>TA</variation>
    <location>
        <begin position="390"/>
        <end position="391"/>
    </location>
</feature>
<feature type="sequence conflict" description="In Ref. 1; CAA38253." evidence="5" ref="1">
    <original>N</original>
    <variation>S</variation>
    <location>
        <position position="725"/>
    </location>
</feature>
<feature type="sequence conflict" description="In Ref. 5; AAB00143." evidence="5" ref="5">
    <original>G</original>
    <variation>E</variation>
    <location>
        <position position="847"/>
    </location>
</feature>
<feature type="sequence conflict" description="In Ref. 5; AAB00143." evidence="5" ref="5">
    <original>E</original>
    <variation>K</variation>
    <location>
        <position position="924"/>
    </location>
</feature>
<feature type="sequence conflict" description="In Ref. 5; AAB00143." evidence="5" ref="5">
    <original>V</original>
    <variation>I</variation>
    <location>
        <position position="1253"/>
    </location>
</feature>
<feature type="sequence conflict" description="In Ref. 5; AAB00143." evidence="5" ref="5">
    <original>I</original>
    <variation>V</variation>
    <location>
        <position position="1319"/>
    </location>
</feature>
<feature type="sequence conflict" description="In Ref. 5; AAB00143." evidence="5" ref="5">
    <original>N</original>
    <variation>S</variation>
    <location>
        <position position="1461"/>
    </location>
</feature>
<feature type="sequence conflict" description="In Ref. 5; AAB00143." evidence="5" ref="5">
    <original>G</original>
    <variation>S</variation>
    <location>
        <position position="1581"/>
    </location>
</feature>
<feature type="sequence conflict" description="In Ref. 5; AAB00143." evidence="5" ref="5">
    <original>I</original>
    <variation>V</variation>
    <location>
        <position position="1600"/>
    </location>
</feature>
<feature type="sequence conflict" description="In Ref. 5; AAB00143." evidence="5" ref="5">
    <original>R</original>
    <variation>S</variation>
    <location>
        <position position="1661"/>
    </location>
</feature>
<feature type="sequence conflict" description="In Ref. 5; AAB00143." evidence="5" ref="5">
    <original>D</original>
    <variation>DEEDDEE</variation>
    <location>
        <position position="1772"/>
    </location>
</feature>
<feature type="helix" evidence="8">
    <location>
        <begin position="12"/>
        <end position="17"/>
    </location>
</feature>
<feature type="helix" evidence="8">
    <location>
        <begin position="19"/>
        <end position="29"/>
    </location>
</feature>
<feature type="helix" evidence="8">
    <location>
        <begin position="33"/>
        <end position="49"/>
    </location>
</feature>
<feature type="helix" evidence="8">
    <location>
        <begin position="51"/>
        <end position="68"/>
    </location>
</feature>
<feature type="turn" evidence="7">
    <location>
        <begin position="69"/>
        <end position="71"/>
    </location>
</feature>
<feature type="helix" evidence="8">
    <location>
        <begin position="73"/>
        <end position="86"/>
    </location>
</feature>
<feature type="strand" evidence="8">
    <location>
        <begin position="91"/>
        <end position="93"/>
    </location>
</feature>
<feature type="helix" evidence="8">
    <location>
        <begin position="98"/>
        <end position="107"/>
    </location>
</feature>
<feature type="strand" evidence="7">
    <location>
        <begin position="110"/>
        <end position="112"/>
    </location>
</feature>
<feature type="turn" evidence="8">
    <location>
        <begin position="114"/>
        <end position="116"/>
    </location>
</feature>
<feature type="helix" evidence="8">
    <location>
        <begin position="127"/>
        <end position="138"/>
    </location>
</feature>
<feature type="helix" evidence="8">
    <location>
        <begin position="140"/>
        <end position="149"/>
    </location>
</feature>
<feature type="helix" evidence="8">
    <location>
        <begin position="155"/>
        <end position="169"/>
    </location>
</feature>
<feature type="helix" evidence="8">
    <location>
        <begin position="173"/>
        <end position="182"/>
    </location>
</feature>
<feature type="helix" evidence="8">
    <location>
        <begin position="186"/>
        <end position="193"/>
    </location>
</feature>
<feature type="helix" evidence="8">
    <location>
        <begin position="199"/>
        <end position="213"/>
    </location>
</feature>
<feature type="helix" evidence="8">
    <location>
        <begin position="217"/>
        <end position="224"/>
    </location>
</feature>
<feature type="turn" evidence="7">
    <location>
        <begin position="225"/>
        <end position="227"/>
    </location>
</feature>
<feature type="helix" evidence="8">
    <location>
        <begin position="228"/>
        <end position="239"/>
    </location>
</feature>
<feature type="helix" evidence="8">
    <location>
        <begin position="241"/>
        <end position="243"/>
    </location>
</feature>
<feature type="helix" evidence="8">
    <location>
        <begin position="246"/>
        <end position="259"/>
    </location>
</feature>
<feature type="helix" evidence="8">
    <location>
        <begin position="263"/>
        <end position="271"/>
    </location>
</feature>
<feature type="helix" evidence="8">
    <location>
        <begin position="275"/>
        <end position="282"/>
    </location>
</feature>
<feature type="turn" evidence="8">
    <location>
        <begin position="283"/>
        <end position="285"/>
    </location>
</feature>
<feature type="strand" evidence="8">
    <location>
        <begin position="288"/>
        <end position="290"/>
    </location>
</feature>
<feature type="helix" evidence="8">
    <location>
        <begin position="296"/>
        <end position="312"/>
    </location>
</feature>
<feature type="helix" evidence="8">
    <location>
        <begin position="320"/>
        <end position="328"/>
    </location>
</feature>
<feature type="helix" evidence="8">
    <location>
        <begin position="332"/>
        <end position="341"/>
    </location>
</feature>
<feature type="helix" evidence="8">
    <location>
        <begin position="349"/>
        <end position="361"/>
    </location>
</feature>
<feature type="helix" evidence="8">
    <location>
        <begin position="365"/>
        <end position="371"/>
    </location>
</feature>
<feature type="strand" evidence="8">
    <location>
        <begin position="375"/>
        <end position="379"/>
    </location>
</feature>
<feature type="turn" evidence="8">
    <location>
        <begin position="388"/>
        <end position="390"/>
    </location>
</feature>
<feature type="strand" evidence="8">
    <location>
        <begin position="393"/>
        <end position="398"/>
    </location>
</feature>
<feature type="helix" evidence="8">
    <location>
        <begin position="399"/>
        <end position="409"/>
    </location>
</feature>
<feature type="turn" evidence="8">
    <location>
        <begin position="411"/>
        <end position="413"/>
    </location>
</feature>
<feature type="helix" evidence="8">
    <location>
        <begin position="416"/>
        <end position="430"/>
    </location>
</feature>
<feature type="helix" evidence="8">
    <location>
        <begin position="434"/>
        <end position="452"/>
    </location>
</feature>
<feature type="turn" evidence="8">
    <location>
        <begin position="453"/>
        <end position="456"/>
    </location>
</feature>
<feature type="helix" evidence="8">
    <location>
        <begin position="494"/>
        <end position="499"/>
    </location>
</feature>
<feature type="helix" evidence="8">
    <location>
        <begin position="505"/>
        <end position="507"/>
    </location>
</feature>
<feature type="helix" evidence="8">
    <location>
        <begin position="509"/>
        <end position="523"/>
    </location>
</feature>
<feature type="strand" evidence="7">
    <location>
        <begin position="527"/>
        <end position="529"/>
    </location>
</feature>
<feature type="helix" evidence="8">
    <location>
        <begin position="530"/>
        <end position="538"/>
    </location>
</feature>
<feature type="helix" evidence="8">
    <location>
        <begin position="554"/>
        <end position="563"/>
    </location>
</feature>
<feature type="turn" evidence="8">
    <location>
        <begin position="564"/>
        <end position="567"/>
    </location>
</feature>
<feature type="strand" evidence="8">
    <location>
        <begin position="569"/>
        <end position="571"/>
    </location>
</feature>
<feature type="helix" evidence="8">
    <location>
        <begin position="572"/>
        <end position="585"/>
    </location>
</feature>
<feature type="helix" evidence="8">
    <location>
        <begin position="589"/>
        <end position="596"/>
    </location>
</feature>
<feature type="helix" evidence="8">
    <location>
        <begin position="599"/>
        <end position="609"/>
    </location>
</feature>
<feature type="helix" evidence="8">
    <location>
        <begin position="617"/>
        <end position="632"/>
    </location>
</feature>
<feature type="strand" evidence="8">
    <location>
        <begin position="638"/>
        <end position="640"/>
    </location>
</feature>
<feature type="helix" evidence="8">
    <location>
        <begin position="642"/>
        <end position="653"/>
    </location>
</feature>
<feature type="helix" evidence="8">
    <location>
        <begin position="655"/>
        <end position="668"/>
    </location>
</feature>
<feature type="helix" evidence="8">
    <location>
        <begin position="670"/>
        <end position="672"/>
    </location>
</feature>
<feature type="helix" evidence="7">
    <location>
        <begin position="680"/>
        <end position="682"/>
    </location>
</feature>
<feature type="strand" evidence="7">
    <location>
        <begin position="690"/>
        <end position="692"/>
    </location>
</feature>
<feature type="helix" evidence="8">
    <location>
        <begin position="698"/>
        <end position="706"/>
    </location>
</feature>
<feature type="helix" evidence="8">
    <location>
        <begin position="708"/>
        <end position="712"/>
    </location>
</feature>
<feature type="strand" evidence="8">
    <location>
        <begin position="714"/>
        <end position="717"/>
    </location>
</feature>
<keyword id="KW-0002">3D-structure</keyword>
<keyword id="KW-0175">Coiled coil</keyword>
<keyword id="KW-0963">Cytoplasm</keyword>
<keyword id="KW-0968">Cytoplasmic vesicle</keyword>
<keyword id="KW-0206">Cytoskeleton</keyword>
<keyword id="KW-0903">Direct protein sequencing</keyword>
<keyword id="KW-0256">Endoplasmic reticulum</keyword>
<keyword id="KW-0333">Golgi apparatus</keyword>
<keyword id="KW-0472">Membrane</keyword>
<keyword id="KW-0597">Phosphoprotein</keyword>
<keyword id="KW-0653">Protein transport</keyword>
<keyword id="KW-1185">Reference proteome</keyword>
<keyword id="KW-0677">Repeat</keyword>
<keyword id="KW-0813">Transport</keyword>